<dbReference type="EMBL" id="CP017623">
    <property type="protein sequence ID" value="AOW25822.1"/>
    <property type="molecule type" value="Genomic_DNA"/>
</dbReference>
<dbReference type="RefSeq" id="XP_718140.2">
    <property type="nucleotide sequence ID" value="XM_713047.2"/>
</dbReference>
<dbReference type="SMR" id="Q5A917"/>
<dbReference type="BioGRID" id="1223004">
    <property type="interactions" value="2"/>
</dbReference>
<dbReference type="FunCoup" id="Q5A917">
    <property type="interactions" value="152"/>
</dbReference>
<dbReference type="STRING" id="237561.Q5A917"/>
<dbReference type="EnsemblFungi" id="C1_01280C_A-T">
    <property type="protein sequence ID" value="C1_01280C_A-T-p1"/>
    <property type="gene ID" value="C1_01280C_A"/>
</dbReference>
<dbReference type="GeneID" id="3640217"/>
<dbReference type="KEGG" id="cal:CAALFM_C101280CA"/>
<dbReference type="CGD" id="CAL0000189257">
    <property type="gene designation" value="MED22"/>
</dbReference>
<dbReference type="VEuPathDB" id="FungiDB:C1_01280C_A"/>
<dbReference type="eggNOG" id="ENOG502SD63">
    <property type="taxonomic scope" value="Eukaryota"/>
</dbReference>
<dbReference type="HOGENOM" id="CLU_153329_0_0_1"/>
<dbReference type="InParanoid" id="Q5A917"/>
<dbReference type="OrthoDB" id="203279at2759"/>
<dbReference type="PRO" id="PR:Q5A917"/>
<dbReference type="Proteomes" id="UP000000559">
    <property type="component" value="Chromosome 1"/>
</dbReference>
<dbReference type="GO" id="GO:0016592">
    <property type="term" value="C:mediator complex"/>
    <property type="evidence" value="ECO:0007669"/>
    <property type="project" value="InterPro"/>
</dbReference>
<dbReference type="GO" id="GO:0003712">
    <property type="term" value="F:transcription coregulator activity"/>
    <property type="evidence" value="ECO:0007669"/>
    <property type="project" value="InterPro"/>
</dbReference>
<dbReference type="GO" id="GO:0006357">
    <property type="term" value="P:regulation of transcription by RNA polymerase II"/>
    <property type="evidence" value="ECO:0007669"/>
    <property type="project" value="InterPro"/>
</dbReference>
<dbReference type="Gene3D" id="6.10.280.160">
    <property type="entry name" value="Mediator of RNA polymerase II transcription subunit 22"/>
    <property type="match status" value="1"/>
</dbReference>
<dbReference type="InterPro" id="IPR009332">
    <property type="entry name" value="Med22"/>
</dbReference>
<dbReference type="Pfam" id="PF06179">
    <property type="entry name" value="Med22"/>
    <property type="match status" value="1"/>
</dbReference>
<proteinExistence type="inferred from homology"/>
<comment type="function">
    <text evidence="1">Component of the Mediator complex, a coactivator involved in the regulated transcription of nearly all RNA polymerase II-dependent genes. Mediator functions as a bridge to convey information from gene-specific regulatory proteins to the basal RNA polymerase II transcription machinery. Mediator is recruited to promoters by direct interactions with regulatory proteins and serves as a scaffold for the assembly of a functional preinitiation complex with RNA polymerase II and the general transcription factors (By similarity).</text>
</comment>
<comment type="subunit">
    <text evidence="1">Component of the Mediator complex.</text>
</comment>
<comment type="subcellular location">
    <subcellularLocation>
        <location evidence="1">Nucleus</location>
    </subcellularLocation>
</comment>
<comment type="similarity">
    <text evidence="2">Belongs to the Mediator complex subunit 22 family.</text>
</comment>
<keyword id="KW-0010">Activator</keyword>
<keyword id="KW-0539">Nucleus</keyword>
<keyword id="KW-1185">Reference proteome</keyword>
<keyword id="KW-0804">Transcription</keyword>
<keyword id="KW-0805">Transcription regulation</keyword>
<evidence type="ECO:0000250" key="1"/>
<evidence type="ECO:0000305" key="2"/>
<gene>
    <name type="primary">SRB6</name>
    <name type="synonym">MED22</name>
    <name type="ordered locus">CAALFM_C101280CA</name>
    <name type="ORF">CaO19.10827</name>
    <name type="ORF">CaO19.3317</name>
</gene>
<protein>
    <recommendedName>
        <fullName>Mediator of RNA polymerase II transcription subunit 22</fullName>
    </recommendedName>
    <alternativeName>
        <fullName>Mediator complex subunit 22</fullName>
    </alternativeName>
</protein>
<feature type="chain" id="PRO_0000308576" description="Mediator of RNA polymerase II transcription subunit 22">
    <location>
        <begin position="1"/>
        <end position="115"/>
    </location>
</feature>
<organism>
    <name type="scientific">Candida albicans (strain SC5314 / ATCC MYA-2876)</name>
    <name type="common">Yeast</name>
    <dbReference type="NCBI Taxonomy" id="237561"/>
    <lineage>
        <taxon>Eukaryota</taxon>
        <taxon>Fungi</taxon>
        <taxon>Dikarya</taxon>
        <taxon>Ascomycota</taxon>
        <taxon>Saccharomycotina</taxon>
        <taxon>Pichiomycetes</taxon>
        <taxon>Debaryomycetaceae</taxon>
        <taxon>Candida/Lodderomyces clade</taxon>
        <taxon>Candida</taxon>
    </lineage>
</organism>
<name>MED22_CANAL</name>
<reference key="1">
    <citation type="journal article" date="2004" name="Proc. Natl. Acad. Sci. U.S.A.">
        <title>The diploid genome sequence of Candida albicans.</title>
        <authorList>
            <person name="Jones T."/>
            <person name="Federspiel N.A."/>
            <person name="Chibana H."/>
            <person name="Dungan J."/>
            <person name="Kalman S."/>
            <person name="Magee B.B."/>
            <person name="Newport G."/>
            <person name="Thorstenson Y.R."/>
            <person name="Agabian N."/>
            <person name="Magee P.T."/>
            <person name="Davis R.W."/>
            <person name="Scherer S."/>
        </authorList>
    </citation>
    <scope>NUCLEOTIDE SEQUENCE [LARGE SCALE GENOMIC DNA]</scope>
    <source>
        <strain>SC5314 / ATCC MYA-2876</strain>
    </source>
</reference>
<reference key="2">
    <citation type="journal article" date="2007" name="Genome Biol.">
        <title>Assembly of the Candida albicans genome into sixteen supercontigs aligned on the eight chromosomes.</title>
        <authorList>
            <person name="van het Hoog M."/>
            <person name="Rast T.J."/>
            <person name="Martchenko M."/>
            <person name="Grindle S."/>
            <person name="Dignard D."/>
            <person name="Hogues H."/>
            <person name="Cuomo C."/>
            <person name="Berriman M."/>
            <person name="Scherer S."/>
            <person name="Magee B.B."/>
            <person name="Whiteway M."/>
            <person name="Chibana H."/>
            <person name="Nantel A."/>
            <person name="Magee P.T."/>
        </authorList>
    </citation>
    <scope>GENOME REANNOTATION</scope>
    <source>
        <strain>SC5314 / ATCC MYA-2876</strain>
    </source>
</reference>
<reference key="3">
    <citation type="journal article" date="2013" name="Genome Biol.">
        <title>Assembly of a phased diploid Candida albicans genome facilitates allele-specific measurements and provides a simple model for repeat and indel structure.</title>
        <authorList>
            <person name="Muzzey D."/>
            <person name="Schwartz K."/>
            <person name="Weissman J.S."/>
            <person name="Sherlock G."/>
        </authorList>
    </citation>
    <scope>NUCLEOTIDE SEQUENCE [LARGE SCALE GENOMIC DNA]</scope>
    <scope>GENOME REANNOTATION</scope>
    <source>
        <strain>SC5314 / ATCC MYA-2876</strain>
    </source>
</reference>
<accession>Q5A917</accession>
<accession>A0A1D8PCF9</accession>
<sequence length="115" mass="13546">MQPKSISLLQKIDSIIETIIVKFTNIFENLQDANKTTEILSMESLAMENNCIQIIRLCQDLISISRNLKEIWVLNSIKVTQEKFEWKQEEIDIMFTQFNLLTDKIAEFETDMNKE</sequence>